<protein>
    <recommendedName>
        <fullName evidence="1">Methylglyoxal synthase</fullName>
        <shortName evidence="1">MGS</shortName>
        <ecNumber evidence="1">4.2.3.3</ecNumber>
    </recommendedName>
</protein>
<name>MGSA_BACAA</name>
<organism>
    <name type="scientific">Bacillus anthracis (strain A0248)</name>
    <dbReference type="NCBI Taxonomy" id="592021"/>
    <lineage>
        <taxon>Bacteria</taxon>
        <taxon>Bacillati</taxon>
        <taxon>Bacillota</taxon>
        <taxon>Bacilli</taxon>
        <taxon>Bacillales</taxon>
        <taxon>Bacillaceae</taxon>
        <taxon>Bacillus</taxon>
        <taxon>Bacillus cereus group</taxon>
    </lineage>
</organism>
<accession>C3P5Q3</accession>
<reference key="1">
    <citation type="submission" date="2009-04" db="EMBL/GenBank/DDBJ databases">
        <title>Genome sequence of Bacillus anthracis A0248.</title>
        <authorList>
            <person name="Dodson R.J."/>
            <person name="Munk A.C."/>
            <person name="Bruce D."/>
            <person name="Detter C."/>
            <person name="Tapia R."/>
            <person name="Sutton G."/>
            <person name="Sims D."/>
            <person name="Brettin T."/>
        </authorList>
    </citation>
    <scope>NUCLEOTIDE SEQUENCE [LARGE SCALE GENOMIC DNA]</scope>
    <source>
        <strain>A0248</strain>
    </source>
</reference>
<evidence type="ECO:0000255" key="1">
    <source>
        <dbReference type="HAMAP-Rule" id="MF_00549"/>
    </source>
</evidence>
<comment type="function">
    <text evidence="1">Catalyzes the formation of methylglyoxal from dihydroxyacetone phosphate.</text>
</comment>
<comment type="catalytic activity">
    <reaction evidence="1">
        <text>dihydroxyacetone phosphate = methylglyoxal + phosphate</text>
        <dbReference type="Rhea" id="RHEA:17937"/>
        <dbReference type="ChEBI" id="CHEBI:17158"/>
        <dbReference type="ChEBI" id="CHEBI:43474"/>
        <dbReference type="ChEBI" id="CHEBI:57642"/>
        <dbReference type="EC" id="4.2.3.3"/>
    </reaction>
</comment>
<comment type="similarity">
    <text evidence="1">Belongs to the methylglyoxal synthase family.</text>
</comment>
<gene>
    <name evidence="1" type="primary">mgsA</name>
    <name type="ordered locus">BAA_1623</name>
</gene>
<sequence>MKIALIAHDKKKEDMVSFAYAYKPIFEQHELFATGTTGLRIMEATGLVVTRYQSGPLGGDQEIGAMIAKNDLDMVIFFRDPLTAQPHEPDVNALLRLCDVYAIPLATNMASAEMLMHALERGDLDYRKLRK</sequence>
<proteinExistence type="inferred from homology"/>
<keyword id="KW-0456">Lyase</keyword>
<feature type="chain" id="PRO_1000146617" description="Methylglyoxal synthase">
    <location>
        <begin position="1"/>
        <end position="131"/>
    </location>
</feature>
<feature type="domain" description="MGS-like" evidence="1">
    <location>
        <begin position="1"/>
        <end position="131"/>
    </location>
</feature>
<feature type="active site" description="Proton donor/acceptor" evidence="1">
    <location>
        <position position="60"/>
    </location>
</feature>
<feature type="binding site" evidence="1">
    <location>
        <position position="8"/>
    </location>
    <ligand>
        <name>substrate</name>
    </ligand>
</feature>
<feature type="binding site" evidence="1">
    <location>
        <position position="12"/>
    </location>
    <ligand>
        <name>substrate</name>
    </ligand>
</feature>
<feature type="binding site" evidence="1">
    <location>
        <begin position="34"/>
        <end position="37"/>
    </location>
    <ligand>
        <name>substrate</name>
    </ligand>
</feature>
<feature type="binding site" evidence="1">
    <location>
        <begin position="54"/>
        <end position="55"/>
    </location>
    <ligand>
        <name>substrate</name>
    </ligand>
</feature>
<feature type="binding site" evidence="1">
    <location>
        <position position="87"/>
    </location>
    <ligand>
        <name>substrate</name>
    </ligand>
</feature>
<dbReference type="EC" id="4.2.3.3" evidence="1"/>
<dbReference type="EMBL" id="CP001598">
    <property type="protein sequence ID" value="ACQ50633.1"/>
    <property type="molecule type" value="Genomic_DNA"/>
</dbReference>
<dbReference type="RefSeq" id="WP_000684757.1">
    <property type="nucleotide sequence ID" value="NC_012659.1"/>
</dbReference>
<dbReference type="SMR" id="C3P5Q3"/>
<dbReference type="GeneID" id="45021528"/>
<dbReference type="KEGG" id="bai:BAA_1623"/>
<dbReference type="HOGENOM" id="CLU_120420_1_0_9"/>
<dbReference type="GO" id="GO:0005829">
    <property type="term" value="C:cytosol"/>
    <property type="evidence" value="ECO:0007669"/>
    <property type="project" value="TreeGrafter"/>
</dbReference>
<dbReference type="GO" id="GO:0008929">
    <property type="term" value="F:methylglyoxal synthase activity"/>
    <property type="evidence" value="ECO:0007669"/>
    <property type="project" value="UniProtKB-UniRule"/>
</dbReference>
<dbReference type="GO" id="GO:0019242">
    <property type="term" value="P:methylglyoxal biosynthetic process"/>
    <property type="evidence" value="ECO:0007669"/>
    <property type="project" value="UniProtKB-UniRule"/>
</dbReference>
<dbReference type="CDD" id="cd01422">
    <property type="entry name" value="MGS"/>
    <property type="match status" value="1"/>
</dbReference>
<dbReference type="FunFam" id="3.40.50.1380:FF:000006">
    <property type="entry name" value="Methylglyoxal synthase"/>
    <property type="match status" value="1"/>
</dbReference>
<dbReference type="Gene3D" id="3.40.50.1380">
    <property type="entry name" value="Methylglyoxal synthase-like domain"/>
    <property type="match status" value="1"/>
</dbReference>
<dbReference type="HAMAP" id="MF_00549">
    <property type="entry name" value="Methylglyoxal_synth"/>
    <property type="match status" value="1"/>
</dbReference>
<dbReference type="InterPro" id="IPR004363">
    <property type="entry name" value="Methylgl_synth"/>
</dbReference>
<dbReference type="InterPro" id="IPR018148">
    <property type="entry name" value="Methylglyoxal_synth_AS"/>
</dbReference>
<dbReference type="InterPro" id="IPR011607">
    <property type="entry name" value="MGS-like_dom"/>
</dbReference>
<dbReference type="InterPro" id="IPR036914">
    <property type="entry name" value="MGS-like_dom_sf"/>
</dbReference>
<dbReference type="NCBIfam" id="TIGR00160">
    <property type="entry name" value="MGSA"/>
    <property type="match status" value="1"/>
</dbReference>
<dbReference type="NCBIfam" id="NF003559">
    <property type="entry name" value="PRK05234.1"/>
    <property type="match status" value="1"/>
</dbReference>
<dbReference type="PANTHER" id="PTHR30492">
    <property type="entry name" value="METHYLGLYOXAL SYNTHASE"/>
    <property type="match status" value="1"/>
</dbReference>
<dbReference type="PANTHER" id="PTHR30492:SF0">
    <property type="entry name" value="METHYLGLYOXAL SYNTHASE"/>
    <property type="match status" value="1"/>
</dbReference>
<dbReference type="Pfam" id="PF02142">
    <property type="entry name" value="MGS"/>
    <property type="match status" value="1"/>
</dbReference>
<dbReference type="PIRSF" id="PIRSF006614">
    <property type="entry name" value="Methylglyox_syn"/>
    <property type="match status" value="1"/>
</dbReference>
<dbReference type="SMART" id="SM00851">
    <property type="entry name" value="MGS"/>
    <property type="match status" value="1"/>
</dbReference>
<dbReference type="SUPFAM" id="SSF52335">
    <property type="entry name" value="Methylglyoxal synthase-like"/>
    <property type="match status" value="1"/>
</dbReference>
<dbReference type="PROSITE" id="PS01335">
    <property type="entry name" value="METHYLGLYOXAL_SYNTH"/>
    <property type="match status" value="1"/>
</dbReference>
<dbReference type="PROSITE" id="PS51855">
    <property type="entry name" value="MGS"/>
    <property type="match status" value="1"/>
</dbReference>